<name>RS17_BUCA5</name>
<feature type="chain" id="PRO_1000166466" description="Small ribosomal subunit protein uS17">
    <location>
        <begin position="1"/>
        <end position="83"/>
    </location>
</feature>
<evidence type="ECO:0000255" key="1">
    <source>
        <dbReference type="HAMAP-Rule" id="MF_01345"/>
    </source>
</evidence>
<evidence type="ECO:0000305" key="2"/>
<keyword id="KW-0687">Ribonucleoprotein</keyword>
<keyword id="KW-0689">Ribosomal protein</keyword>
<keyword id="KW-0694">RNA-binding</keyword>
<keyword id="KW-0699">rRNA-binding</keyword>
<gene>
    <name evidence="1" type="primary">rpsQ</name>
    <name type="ordered locus">BUAP5A_508</name>
</gene>
<comment type="function">
    <text evidence="1">One of the primary rRNA binding proteins, it binds specifically to the 5'-end of 16S ribosomal RNA.</text>
</comment>
<comment type="subunit">
    <text evidence="1">Part of the 30S ribosomal subunit.</text>
</comment>
<comment type="similarity">
    <text evidence="1">Belongs to the universal ribosomal protein uS17 family.</text>
</comment>
<sequence>MEKIRTLQGRVISNKMQKSAVVAIERFVKHIIYGKFIKRTTKLHIHDEKNECTVGDLIEIRESRPISKTKSWVLVRIIEKTVF</sequence>
<proteinExistence type="inferred from homology"/>
<accession>B8D9T8</accession>
<reference key="1">
    <citation type="journal article" date="2009" name="Science">
        <title>The dynamics and time scale of ongoing genomic erosion in symbiotic bacteria.</title>
        <authorList>
            <person name="Moran N.A."/>
            <person name="McLaughlin H.J."/>
            <person name="Sorek R."/>
        </authorList>
    </citation>
    <scope>NUCLEOTIDE SEQUENCE [LARGE SCALE GENOMIC DNA]</scope>
    <source>
        <strain>5A</strain>
    </source>
</reference>
<protein>
    <recommendedName>
        <fullName evidence="1">Small ribosomal subunit protein uS17</fullName>
    </recommendedName>
    <alternativeName>
        <fullName evidence="2">30S ribosomal protein S17</fullName>
    </alternativeName>
</protein>
<dbReference type="EMBL" id="CP001161">
    <property type="protein sequence ID" value="ACL30859.1"/>
    <property type="molecule type" value="Genomic_DNA"/>
</dbReference>
<dbReference type="SMR" id="B8D9T8"/>
<dbReference type="KEGG" id="bap:BUAP5A_508"/>
<dbReference type="HOGENOM" id="CLU_073626_1_1_6"/>
<dbReference type="Proteomes" id="UP000006904">
    <property type="component" value="Chromosome"/>
</dbReference>
<dbReference type="GO" id="GO:0022627">
    <property type="term" value="C:cytosolic small ribosomal subunit"/>
    <property type="evidence" value="ECO:0007669"/>
    <property type="project" value="TreeGrafter"/>
</dbReference>
<dbReference type="GO" id="GO:0019843">
    <property type="term" value="F:rRNA binding"/>
    <property type="evidence" value="ECO:0007669"/>
    <property type="project" value="UniProtKB-UniRule"/>
</dbReference>
<dbReference type="GO" id="GO:0003735">
    <property type="term" value="F:structural constituent of ribosome"/>
    <property type="evidence" value="ECO:0007669"/>
    <property type="project" value="InterPro"/>
</dbReference>
<dbReference type="GO" id="GO:0006412">
    <property type="term" value="P:translation"/>
    <property type="evidence" value="ECO:0007669"/>
    <property type="project" value="UniProtKB-UniRule"/>
</dbReference>
<dbReference type="CDD" id="cd00364">
    <property type="entry name" value="Ribosomal_uS17"/>
    <property type="match status" value="1"/>
</dbReference>
<dbReference type="FunFam" id="2.40.50.140:FF:000014">
    <property type="entry name" value="30S ribosomal protein S17"/>
    <property type="match status" value="1"/>
</dbReference>
<dbReference type="Gene3D" id="2.40.50.140">
    <property type="entry name" value="Nucleic acid-binding proteins"/>
    <property type="match status" value="1"/>
</dbReference>
<dbReference type="HAMAP" id="MF_01345_B">
    <property type="entry name" value="Ribosomal_uS17_B"/>
    <property type="match status" value="1"/>
</dbReference>
<dbReference type="InterPro" id="IPR012340">
    <property type="entry name" value="NA-bd_OB-fold"/>
</dbReference>
<dbReference type="InterPro" id="IPR000266">
    <property type="entry name" value="Ribosomal_uS17"/>
</dbReference>
<dbReference type="InterPro" id="IPR019984">
    <property type="entry name" value="Ribosomal_uS17_bact/chlr"/>
</dbReference>
<dbReference type="InterPro" id="IPR019979">
    <property type="entry name" value="Ribosomal_uS17_CS"/>
</dbReference>
<dbReference type="NCBIfam" id="NF004123">
    <property type="entry name" value="PRK05610.1"/>
    <property type="match status" value="1"/>
</dbReference>
<dbReference type="NCBIfam" id="TIGR03635">
    <property type="entry name" value="uS17_bact"/>
    <property type="match status" value="1"/>
</dbReference>
<dbReference type="PANTHER" id="PTHR10744">
    <property type="entry name" value="40S RIBOSOMAL PROTEIN S11 FAMILY MEMBER"/>
    <property type="match status" value="1"/>
</dbReference>
<dbReference type="PANTHER" id="PTHR10744:SF1">
    <property type="entry name" value="SMALL RIBOSOMAL SUBUNIT PROTEIN US17M"/>
    <property type="match status" value="1"/>
</dbReference>
<dbReference type="Pfam" id="PF00366">
    <property type="entry name" value="Ribosomal_S17"/>
    <property type="match status" value="1"/>
</dbReference>
<dbReference type="PRINTS" id="PR00973">
    <property type="entry name" value="RIBOSOMALS17"/>
</dbReference>
<dbReference type="SUPFAM" id="SSF50249">
    <property type="entry name" value="Nucleic acid-binding proteins"/>
    <property type="match status" value="1"/>
</dbReference>
<dbReference type="PROSITE" id="PS00056">
    <property type="entry name" value="RIBOSOMAL_S17"/>
    <property type="match status" value="1"/>
</dbReference>
<organism>
    <name type="scientific">Buchnera aphidicola subsp. Acyrthosiphon pisum (strain 5A)</name>
    <dbReference type="NCBI Taxonomy" id="563178"/>
    <lineage>
        <taxon>Bacteria</taxon>
        <taxon>Pseudomonadati</taxon>
        <taxon>Pseudomonadota</taxon>
        <taxon>Gammaproteobacteria</taxon>
        <taxon>Enterobacterales</taxon>
        <taxon>Erwiniaceae</taxon>
        <taxon>Buchnera</taxon>
    </lineage>
</organism>